<organism>
    <name type="scientific">Geobacillus kaustophilus (strain HTA426)</name>
    <dbReference type="NCBI Taxonomy" id="235909"/>
    <lineage>
        <taxon>Bacteria</taxon>
        <taxon>Bacillati</taxon>
        <taxon>Bacillota</taxon>
        <taxon>Bacilli</taxon>
        <taxon>Bacillales</taxon>
        <taxon>Anoxybacillaceae</taxon>
        <taxon>Geobacillus</taxon>
        <taxon>Geobacillus thermoleovorans group</taxon>
    </lineage>
</organism>
<evidence type="ECO:0000255" key="1">
    <source>
        <dbReference type="HAMAP-Rule" id="MF_01309"/>
    </source>
</evidence>
<evidence type="ECO:0000305" key="2"/>
<keyword id="KW-1185">Reference proteome</keyword>
<keyword id="KW-0687">Ribonucleoprotein</keyword>
<keyword id="KW-0689">Ribosomal protein</keyword>
<keyword id="KW-0694">RNA-binding</keyword>
<keyword id="KW-0699">rRNA-binding</keyword>
<name>RS3_GEOKA</name>
<reference key="1">
    <citation type="journal article" date="2004" name="Nucleic Acids Res.">
        <title>Thermoadaptation trait revealed by the genome sequence of thermophilic Geobacillus kaustophilus.</title>
        <authorList>
            <person name="Takami H."/>
            <person name="Takaki Y."/>
            <person name="Chee G.-J."/>
            <person name="Nishi S."/>
            <person name="Shimamura S."/>
            <person name="Suzuki H."/>
            <person name="Matsui S."/>
            <person name="Uchiyama I."/>
        </authorList>
    </citation>
    <scope>NUCLEOTIDE SEQUENCE [LARGE SCALE GENOMIC DNA]</scope>
    <source>
        <strain>HTA426</strain>
    </source>
</reference>
<sequence>MGQKVNPIGLRIGIIRDWESRWYAEKDYADLLHEDLKIREYISKRLQDAAVSRVEIERAANRVNVTIHTAKPGMVIGKGGSEVEALRKALAQLTGKRVHINIVEIKKPDLDARLVAENIARQLENRVSFRRAQKQAIQRAMRAGAKGIKTMVSGRLGGADIARSEHYSEGTVPLHTLRADIDYGTAEADTTYGKIGVKVWIYRGEVLPTKKKAEEGGK</sequence>
<comment type="function">
    <text evidence="1">Binds the lower part of the 30S subunit head. Binds mRNA in the 70S ribosome, positioning it for translation.</text>
</comment>
<comment type="subunit">
    <text evidence="1">Part of the 30S ribosomal subunit. Forms a tight complex with proteins S10 and S14.</text>
</comment>
<comment type="similarity">
    <text evidence="1">Belongs to the universal ribosomal protein uS3 family.</text>
</comment>
<gene>
    <name evidence="1" type="primary">rpsC</name>
    <name type="ordered locus">GK0112</name>
</gene>
<dbReference type="EMBL" id="BA000043">
    <property type="protein sequence ID" value="BAD74397.1"/>
    <property type="molecule type" value="Genomic_DNA"/>
</dbReference>
<dbReference type="RefSeq" id="WP_011229626.1">
    <property type="nucleotide sequence ID" value="NC_006510.1"/>
</dbReference>
<dbReference type="SMR" id="Q5L417"/>
<dbReference type="STRING" id="235909.GK0112"/>
<dbReference type="GeneID" id="32062100"/>
<dbReference type="KEGG" id="gka:GK0112"/>
<dbReference type="eggNOG" id="COG0092">
    <property type="taxonomic scope" value="Bacteria"/>
</dbReference>
<dbReference type="HOGENOM" id="CLU_058591_0_2_9"/>
<dbReference type="Proteomes" id="UP000001172">
    <property type="component" value="Chromosome"/>
</dbReference>
<dbReference type="GO" id="GO:0022627">
    <property type="term" value="C:cytosolic small ribosomal subunit"/>
    <property type="evidence" value="ECO:0007669"/>
    <property type="project" value="TreeGrafter"/>
</dbReference>
<dbReference type="GO" id="GO:0003729">
    <property type="term" value="F:mRNA binding"/>
    <property type="evidence" value="ECO:0007669"/>
    <property type="project" value="UniProtKB-UniRule"/>
</dbReference>
<dbReference type="GO" id="GO:0019843">
    <property type="term" value="F:rRNA binding"/>
    <property type="evidence" value="ECO:0007669"/>
    <property type="project" value="UniProtKB-UniRule"/>
</dbReference>
<dbReference type="GO" id="GO:0003735">
    <property type="term" value="F:structural constituent of ribosome"/>
    <property type="evidence" value="ECO:0007669"/>
    <property type="project" value="InterPro"/>
</dbReference>
<dbReference type="GO" id="GO:0006412">
    <property type="term" value="P:translation"/>
    <property type="evidence" value="ECO:0007669"/>
    <property type="project" value="UniProtKB-UniRule"/>
</dbReference>
<dbReference type="CDD" id="cd02412">
    <property type="entry name" value="KH-II_30S_S3"/>
    <property type="match status" value="1"/>
</dbReference>
<dbReference type="FunFam" id="3.30.1140.32:FF:000001">
    <property type="entry name" value="30S ribosomal protein S3"/>
    <property type="match status" value="1"/>
</dbReference>
<dbReference type="FunFam" id="3.30.300.20:FF:000001">
    <property type="entry name" value="30S ribosomal protein S3"/>
    <property type="match status" value="1"/>
</dbReference>
<dbReference type="Gene3D" id="3.30.300.20">
    <property type="match status" value="1"/>
</dbReference>
<dbReference type="Gene3D" id="3.30.1140.32">
    <property type="entry name" value="Ribosomal protein S3, C-terminal domain"/>
    <property type="match status" value="1"/>
</dbReference>
<dbReference type="HAMAP" id="MF_01309_B">
    <property type="entry name" value="Ribosomal_uS3_B"/>
    <property type="match status" value="1"/>
</dbReference>
<dbReference type="InterPro" id="IPR004087">
    <property type="entry name" value="KH_dom"/>
</dbReference>
<dbReference type="InterPro" id="IPR015946">
    <property type="entry name" value="KH_dom-like_a/b"/>
</dbReference>
<dbReference type="InterPro" id="IPR004044">
    <property type="entry name" value="KH_dom_type_2"/>
</dbReference>
<dbReference type="InterPro" id="IPR009019">
    <property type="entry name" value="KH_sf_prok-type"/>
</dbReference>
<dbReference type="InterPro" id="IPR036419">
    <property type="entry name" value="Ribosomal_S3_C_sf"/>
</dbReference>
<dbReference type="InterPro" id="IPR005704">
    <property type="entry name" value="Ribosomal_uS3_bac-typ"/>
</dbReference>
<dbReference type="InterPro" id="IPR001351">
    <property type="entry name" value="Ribosomal_uS3_C"/>
</dbReference>
<dbReference type="InterPro" id="IPR018280">
    <property type="entry name" value="Ribosomal_uS3_CS"/>
</dbReference>
<dbReference type="NCBIfam" id="TIGR01009">
    <property type="entry name" value="rpsC_bact"/>
    <property type="match status" value="1"/>
</dbReference>
<dbReference type="PANTHER" id="PTHR11760">
    <property type="entry name" value="30S/40S RIBOSOMAL PROTEIN S3"/>
    <property type="match status" value="1"/>
</dbReference>
<dbReference type="PANTHER" id="PTHR11760:SF19">
    <property type="entry name" value="SMALL RIBOSOMAL SUBUNIT PROTEIN US3C"/>
    <property type="match status" value="1"/>
</dbReference>
<dbReference type="Pfam" id="PF07650">
    <property type="entry name" value="KH_2"/>
    <property type="match status" value="1"/>
</dbReference>
<dbReference type="Pfam" id="PF00189">
    <property type="entry name" value="Ribosomal_S3_C"/>
    <property type="match status" value="1"/>
</dbReference>
<dbReference type="SMART" id="SM00322">
    <property type="entry name" value="KH"/>
    <property type="match status" value="1"/>
</dbReference>
<dbReference type="SUPFAM" id="SSF54814">
    <property type="entry name" value="Prokaryotic type KH domain (KH-domain type II)"/>
    <property type="match status" value="1"/>
</dbReference>
<dbReference type="SUPFAM" id="SSF54821">
    <property type="entry name" value="Ribosomal protein S3 C-terminal domain"/>
    <property type="match status" value="1"/>
</dbReference>
<dbReference type="PROSITE" id="PS50823">
    <property type="entry name" value="KH_TYPE_2"/>
    <property type="match status" value="1"/>
</dbReference>
<dbReference type="PROSITE" id="PS00548">
    <property type="entry name" value="RIBOSOMAL_S3"/>
    <property type="match status" value="1"/>
</dbReference>
<protein>
    <recommendedName>
        <fullName evidence="1">Small ribosomal subunit protein uS3</fullName>
    </recommendedName>
    <alternativeName>
        <fullName evidence="2">30S ribosomal protein S3</fullName>
    </alternativeName>
</protein>
<proteinExistence type="inferred from homology"/>
<accession>Q5L417</accession>
<feature type="chain" id="PRO_0000130123" description="Small ribosomal subunit protein uS3">
    <location>
        <begin position="1"/>
        <end position="218"/>
    </location>
</feature>
<feature type="domain" description="KH type-2" evidence="1">
    <location>
        <begin position="38"/>
        <end position="106"/>
    </location>
</feature>